<name>FTSH_CORGL</name>
<accession>Q6M2F0</accession>
<accession>Q8NM83</accession>
<gene>
    <name evidence="1" type="primary">ftsH</name>
    <name type="ordered locus">Cgl2696</name>
    <name type="ordered locus">cg2984</name>
</gene>
<comment type="function">
    <text evidence="1">Acts as a processive, ATP-dependent zinc metallopeptidase for both cytoplasmic and membrane proteins. Plays a role in the quality control of integral membrane proteins.</text>
</comment>
<comment type="cofactor">
    <cofactor evidence="1">
        <name>Zn(2+)</name>
        <dbReference type="ChEBI" id="CHEBI:29105"/>
    </cofactor>
    <text evidence="1">Binds 1 zinc ion per subunit.</text>
</comment>
<comment type="subunit">
    <text evidence="1">Homohexamer.</text>
</comment>
<comment type="subcellular location">
    <subcellularLocation>
        <location evidence="1">Cell membrane</location>
        <topology evidence="1">Multi-pass membrane protein</topology>
        <orientation evidence="1">Cytoplasmic side</orientation>
    </subcellularLocation>
</comment>
<comment type="disruption phenotype">
    <text evidence="3">Not essential for growth. A number of proteins can be seen to be more stable in the disruption mutants, suggesting some of them may be substrates for the protease.</text>
</comment>
<comment type="similarity">
    <text evidence="1">In the central section; belongs to the AAA ATPase family.</text>
</comment>
<comment type="similarity">
    <text evidence="1">In the C-terminal section; belongs to the peptidase M41 family.</text>
</comment>
<comment type="sequence caution" evidence="4">
    <conflict type="erroneous initiation">
        <sequence resource="EMBL-CDS" id="BAC00090"/>
    </conflict>
    <text>Extended N-terminus.</text>
</comment>
<keyword id="KW-0067">ATP-binding</keyword>
<keyword id="KW-1003">Cell membrane</keyword>
<keyword id="KW-0378">Hydrolase</keyword>
<keyword id="KW-0472">Membrane</keyword>
<keyword id="KW-0479">Metal-binding</keyword>
<keyword id="KW-0482">Metalloprotease</keyword>
<keyword id="KW-0547">Nucleotide-binding</keyword>
<keyword id="KW-0645">Protease</keyword>
<keyword id="KW-1185">Reference proteome</keyword>
<keyword id="KW-0812">Transmembrane</keyword>
<keyword id="KW-1133">Transmembrane helix</keyword>
<keyword id="KW-0862">Zinc</keyword>
<dbReference type="EC" id="3.4.24.-" evidence="1"/>
<dbReference type="EMBL" id="BA000036">
    <property type="protein sequence ID" value="BAC00090.1"/>
    <property type="status" value="ALT_INIT"/>
    <property type="molecule type" value="Genomic_DNA"/>
</dbReference>
<dbReference type="EMBL" id="BX927156">
    <property type="protein sequence ID" value="CAF20719.1"/>
    <property type="molecule type" value="Genomic_DNA"/>
</dbReference>
<dbReference type="RefSeq" id="NP_601892.1">
    <property type="nucleotide sequence ID" value="NC_003450.3"/>
</dbReference>
<dbReference type="RefSeq" id="WP_011015317.1">
    <property type="nucleotide sequence ID" value="NC_006958.1"/>
</dbReference>
<dbReference type="SMR" id="Q6M2F0"/>
<dbReference type="STRING" id="196627.cg2984"/>
<dbReference type="MEROPS" id="M41.015"/>
<dbReference type="GeneID" id="1020643"/>
<dbReference type="KEGG" id="cgb:cg2984"/>
<dbReference type="KEGG" id="cgl:Cgl2696"/>
<dbReference type="PATRIC" id="fig|196627.13.peg.2628"/>
<dbReference type="eggNOG" id="COG0465">
    <property type="taxonomic scope" value="Bacteria"/>
</dbReference>
<dbReference type="HOGENOM" id="CLU_000688_16_1_11"/>
<dbReference type="OrthoDB" id="9809379at2"/>
<dbReference type="BioCyc" id="CORYNE:G18NG-12313-MONOMER"/>
<dbReference type="Proteomes" id="UP000000582">
    <property type="component" value="Chromosome"/>
</dbReference>
<dbReference type="Proteomes" id="UP000001009">
    <property type="component" value="Chromosome"/>
</dbReference>
<dbReference type="GO" id="GO:0005886">
    <property type="term" value="C:plasma membrane"/>
    <property type="evidence" value="ECO:0007669"/>
    <property type="project" value="UniProtKB-SubCell"/>
</dbReference>
<dbReference type="GO" id="GO:0005524">
    <property type="term" value="F:ATP binding"/>
    <property type="evidence" value="ECO:0007669"/>
    <property type="project" value="UniProtKB-UniRule"/>
</dbReference>
<dbReference type="GO" id="GO:0016887">
    <property type="term" value="F:ATP hydrolysis activity"/>
    <property type="evidence" value="ECO:0007669"/>
    <property type="project" value="UniProtKB-UniRule"/>
</dbReference>
<dbReference type="GO" id="GO:0004176">
    <property type="term" value="F:ATP-dependent peptidase activity"/>
    <property type="evidence" value="ECO:0007669"/>
    <property type="project" value="InterPro"/>
</dbReference>
<dbReference type="GO" id="GO:0004222">
    <property type="term" value="F:metalloendopeptidase activity"/>
    <property type="evidence" value="ECO:0007669"/>
    <property type="project" value="InterPro"/>
</dbReference>
<dbReference type="GO" id="GO:0008270">
    <property type="term" value="F:zinc ion binding"/>
    <property type="evidence" value="ECO:0007669"/>
    <property type="project" value="UniProtKB-UniRule"/>
</dbReference>
<dbReference type="GO" id="GO:0030163">
    <property type="term" value="P:protein catabolic process"/>
    <property type="evidence" value="ECO:0007669"/>
    <property type="project" value="UniProtKB-UniRule"/>
</dbReference>
<dbReference type="GO" id="GO:0006508">
    <property type="term" value="P:proteolysis"/>
    <property type="evidence" value="ECO:0007669"/>
    <property type="project" value="UniProtKB-KW"/>
</dbReference>
<dbReference type="CDD" id="cd19501">
    <property type="entry name" value="RecA-like_FtsH"/>
    <property type="match status" value="1"/>
</dbReference>
<dbReference type="FunFam" id="1.10.8.60:FF:000001">
    <property type="entry name" value="ATP-dependent zinc metalloprotease FtsH"/>
    <property type="match status" value="1"/>
</dbReference>
<dbReference type="FunFam" id="1.20.58.760:FF:000001">
    <property type="entry name" value="ATP-dependent zinc metalloprotease FtsH"/>
    <property type="match status" value="1"/>
</dbReference>
<dbReference type="FunFam" id="3.40.50.300:FF:000001">
    <property type="entry name" value="ATP-dependent zinc metalloprotease FtsH"/>
    <property type="match status" value="1"/>
</dbReference>
<dbReference type="Gene3D" id="1.10.8.60">
    <property type="match status" value="1"/>
</dbReference>
<dbReference type="Gene3D" id="3.40.50.300">
    <property type="entry name" value="P-loop containing nucleotide triphosphate hydrolases"/>
    <property type="match status" value="1"/>
</dbReference>
<dbReference type="Gene3D" id="1.20.58.760">
    <property type="entry name" value="Peptidase M41"/>
    <property type="match status" value="1"/>
</dbReference>
<dbReference type="HAMAP" id="MF_01458">
    <property type="entry name" value="FtsH"/>
    <property type="match status" value="1"/>
</dbReference>
<dbReference type="InterPro" id="IPR003593">
    <property type="entry name" value="AAA+_ATPase"/>
</dbReference>
<dbReference type="InterPro" id="IPR041569">
    <property type="entry name" value="AAA_lid_3"/>
</dbReference>
<dbReference type="InterPro" id="IPR003959">
    <property type="entry name" value="ATPase_AAA_core"/>
</dbReference>
<dbReference type="InterPro" id="IPR003960">
    <property type="entry name" value="ATPase_AAA_CS"/>
</dbReference>
<dbReference type="InterPro" id="IPR005936">
    <property type="entry name" value="FtsH"/>
</dbReference>
<dbReference type="InterPro" id="IPR027417">
    <property type="entry name" value="P-loop_NTPase"/>
</dbReference>
<dbReference type="InterPro" id="IPR011546">
    <property type="entry name" value="Pept_M41_FtsH_extracell"/>
</dbReference>
<dbReference type="InterPro" id="IPR000642">
    <property type="entry name" value="Peptidase_M41"/>
</dbReference>
<dbReference type="InterPro" id="IPR037219">
    <property type="entry name" value="Peptidase_M41-like"/>
</dbReference>
<dbReference type="NCBIfam" id="TIGR01241">
    <property type="entry name" value="FtsH_fam"/>
    <property type="match status" value="1"/>
</dbReference>
<dbReference type="PANTHER" id="PTHR23076:SF97">
    <property type="entry name" value="ATP-DEPENDENT ZINC METALLOPROTEASE YME1L1"/>
    <property type="match status" value="1"/>
</dbReference>
<dbReference type="PANTHER" id="PTHR23076">
    <property type="entry name" value="METALLOPROTEASE M41 FTSH"/>
    <property type="match status" value="1"/>
</dbReference>
<dbReference type="Pfam" id="PF00004">
    <property type="entry name" value="AAA"/>
    <property type="match status" value="1"/>
</dbReference>
<dbReference type="Pfam" id="PF17862">
    <property type="entry name" value="AAA_lid_3"/>
    <property type="match status" value="1"/>
</dbReference>
<dbReference type="Pfam" id="PF06480">
    <property type="entry name" value="FtsH_ext"/>
    <property type="match status" value="1"/>
</dbReference>
<dbReference type="Pfam" id="PF01434">
    <property type="entry name" value="Peptidase_M41"/>
    <property type="match status" value="1"/>
</dbReference>
<dbReference type="PRINTS" id="PR00830">
    <property type="entry name" value="ENDOLAPTASE"/>
</dbReference>
<dbReference type="SMART" id="SM00382">
    <property type="entry name" value="AAA"/>
    <property type="match status" value="1"/>
</dbReference>
<dbReference type="SUPFAM" id="SSF140990">
    <property type="entry name" value="FtsH protease domain-like"/>
    <property type="match status" value="1"/>
</dbReference>
<dbReference type="SUPFAM" id="SSF52540">
    <property type="entry name" value="P-loop containing nucleoside triphosphate hydrolases"/>
    <property type="match status" value="1"/>
</dbReference>
<dbReference type="PROSITE" id="PS00674">
    <property type="entry name" value="AAA"/>
    <property type="match status" value="1"/>
</dbReference>
<protein>
    <recommendedName>
        <fullName evidence="1">ATP-dependent zinc metalloprotease FtsH</fullName>
        <ecNumber evidence="1">3.4.24.-</ecNumber>
    </recommendedName>
</protein>
<organism>
    <name type="scientific">Corynebacterium glutamicum (strain ATCC 13032 / DSM 20300 / JCM 1318 / BCRC 11384 / CCUG 27702 / LMG 3730 / NBRC 12168 / NCIMB 10025 / NRRL B-2784 / 534)</name>
    <dbReference type="NCBI Taxonomy" id="196627"/>
    <lineage>
        <taxon>Bacteria</taxon>
        <taxon>Bacillati</taxon>
        <taxon>Actinomycetota</taxon>
        <taxon>Actinomycetes</taxon>
        <taxon>Mycobacteriales</taxon>
        <taxon>Corynebacteriaceae</taxon>
        <taxon>Corynebacterium</taxon>
    </lineage>
</organism>
<proteinExistence type="inferred from homology"/>
<feature type="chain" id="PRO_0000400341" description="ATP-dependent zinc metalloprotease FtsH">
    <location>
        <begin position="1"/>
        <end position="853"/>
    </location>
</feature>
<feature type="topological domain" description="Cytoplasmic" evidence="1">
    <location>
        <begin position="1"/>
        <end position="5"/>
    </location>
</feature>
<feature type="transmembrane region" description="Helical" evidence="1">
    <location>
        <begin position="6"/>
        <end position="26"/>
    </location>
</feature>
<feature type="topological domain" description="Extracellular" evidence="1">
    <location>
        <begin position="27"/>
        <end position="113"/>
    </location>
</feature>
<feature type="transmembrane region" description="Helical" evidence="1">
    <location>
        <begin position="114"/>
        <end position="134"/>
    </location>
</feature>
<feature type="topological domain" description="Cytoplasmic" evidence="1">
    <location>
        <begin position="135"/>
        <end position="853"/>
    </location>
</feature>
<feature type="region of interest" description="Disordered" evidence="2">
    <location>
        <begin position="619"/>
        <end position="853"/>
    </location>
</feature>
<feature type="compositionally biased region" description="Basic and acidic residues" evidence="2">
    <location>
        <begin position="619"/>
        <end position="632"/>
    </location>
</feature>
<feature type="compositionally biased region" description="Basic and acidic residues" evidence="2">
    <location>
        <begin position="639"/>
        <end position="648"/>
    </location>
</feature>
<feature type="compositionally biased region" description="Low complexity" evidence="2">
    <location>
        <begin position="677"/>
        <end position="695"/>
    </location>
</feature>
<feature type="compositionally biased region" description="Polar residues" evidence="2">
    <location>
        <begin position="728"/>
        <end position="739"/>
    </location>
</feature>
<feature type="compositionally biased region" description="Polar residues" evidence="2">
    <location>
        <begin position="770"/>
        <end position="788"/>
    </location>
</feature>
<feature type="compositionally biased region" description="Basic and acidic residues" evidence="2">
    <location>
        <begin position="796"/>
        <end position="813"/>
    </location>
</feature>
<feature type="active site" evidence="1">
    <location>
        <position position="428"/>
    </location>
</feature>
<feature type="binding site" evidence="1">
    <location>
        <begin position="205"/>
        <end position="212"/>
    </location>
    <ligand>
        <name>ATP</name>
        <dbReference type="ChEBI" id="CHEBI:30616"/>
    </ligand>
</feature>
<feature type="binding site" evidence="1">
    <location>
        <position position="427"/>
    </location>
    <ligand>
        <name>Zn(2+)</name>
        <dbReference type="ChEBI" id="CHEBI:29105"/>
        <note>catalytic</note>
    </ligand>
</feature>
<feature type="binding site" evidence="1">
    <location>
        <position position="431"/>
    </location>
    <ligand>
        <name>Zn(2+)</name>
        <dbReference type="ChEBI" id="CHEBI:29105"/>
        <note>catalytic</note>
    </ligand>
</feature>
<feature type="binding site" evidence="1">
    <location>
        <position position="503"/>
    </location>
    <ligand>
        <name>Zn(2+)</name>
        <dbReference type="ChEBI" id="CHEBI:29105"/>
        <note>catalytic</note>
    </ligand>
</feature>
<evidence type="ECO:0000255" key="1">
    <source>
        <dbReference type="HAMAP-Rule" id="MF_01458"/>
    </source>
</evidence>
<evidence type="ECO:0000256" key="2">
    <source>
        <dbReference type="SAM" id="MobiDB-lite"/>
    </source>
</evidence>
<evidence type="ECO:0000269" key="3">
    <source>
    </source>
</evidence>
<evidence type="ECO:0000305" key="4"/>
<reference key="1">
    <citation type="journal article" date="2003" name="Appl. Microbiol. Biotechnol.">
        <title>The Corynebacterium glutamicum genome: features and impacts on biotechnological processes.</title>
        <authorList>
            <person name="Ikeda M."/>
            <person name="Nakagawa S."/>
        </authorList>
    </citation>
    <scope>NUCLEOTIDE SEQUENCE [LARGE SCALE GENOMIC DNA]</scope>
    <source>
        <strain>ATCC 13032 / DSM 20300 / JCM 1318 / BCRC 11384 / CCUG 27702 / LMG 3730 / NBRC 12168 / NCIMB 10025 / NRRL B-2784 / 534</strain>
    </source>
</reference>
<reference key="2">
    <citation type="journal article" date="2003" name="J. Biotechnol.">
        <title>The complete Corynebacterium glutamicum ATCC 13032 genome sequence and its impact on the production of L-aspartate-derived amino acids and vitamins.</title>
        <authorList>
            <person name="Kalinowski J."/>
            <person name="Bathe B."/>
            <person name="Bartels D."/>
            <person name="Bischoff N."/>
            <person name="Bott M."/>
            <person name="Burkovski A."/>
            <person name="Dusch N."/>
            <person name="Eggeling L."/>
            <person name="Eikmanns B.J."/>
            <person name="Gaigalat L."/>
            <person name="Goesmann A."/>
            <person name="Hartmann M."/>
            <person name="Huthmacher K."/>
            <person name="Kraemer R."/>
            <person name="Linke B."/>
            <person name="McHardy A.C."/>
            <person name="Meyer F."/>
            <person name="Moeckel B."/>
            <person name="Pfefferle W."/>
            <person name="Puehler A."/>
            <person name="Rey D.A."/>
            <person name="Rueckert C."/>
            <person name="Rupp O."/>
            <person name="Sahm H."/>
            <person name="Wendisch V.F."/>
            <person name="Wiegraebe I."/>
            <person name="Tauch A."/>
        </authorList>
    </citation>
    <scope>NUCLEOTIDE SEQUENCE [LARGE SCALE GENOMIC DNA]</scope>
    <source>
        <strain>ATCC 13032 / DSM 20300 / JCM 1318 / BCRC 11384 / CCUG 27702 / LMG 3730 / NBRC 12168 / NCIMB 10025 / NRRL B-2784 / 534</strain>
    </source>
</reference>
<reference key="3">
    <citation type="journal article" date="2007" name="BMC Microbiol.">
        <title>A proteomic study of Corynebacterium glutamicum AAA+ protease FtsH.</title>
        <authorList>
            <person name="Ludke A."/>
            <person name="Kramer R."/>
            <person name="Burkovski A."/>
            <person name="Schluesener D."/>
            <person name="Poetsch A."/>
        </authorList>
    </citation>
    <scope>SUBCELLULAR LOCATION</scope>
    <scope>DISRUPTION PHENOTYPE</scope>
    <source>
        <strain>ATCC 13032 / DSM 20300 / JCM 1318 / BCRC 11384 / CCUG 27702 / LMG 3730 / NBRC 12168 / NCIMB 10025 / NRRL B-2784 / 534</strain>
    </source>
</reference>
<sequence length="853" mass="92253">MKNKKYLQFGGIAAVILIVLFLVSLFSSDTRNFQEVDTSVAMAQLDAGNVAEAQIDDREQRVRLTLREPITVDEREGVEEILAQYPARTAPAIFEKVEASNTDSYTTNVTQESFLMSMLSFILPMVIIFGLLMFFLTRMQGGGMFGIGGSKAKQLTKDMPTNTFADVAGAEEAVDELHEIKDFLEDPTRYEALGAKIPRGVLLYGPPGTGKTLLARAVAGEAGVPFYSISGSDFVEMFVGVGASRVRDLFKQAKENSPCIIFVDEIDAVGRARGSGMGGGHDEREQTLNQLLVEMDGFGDRQGVILMAATNRPDVLDPALLRPGRFDRQIPVTNPDLRGREQILEVHAKGKPFAPDADIKALAKRTAGMSGADLANVLNEAALLTARVGGNVITADALEEATDRVVGGPRRSGKVISEKEKKVTAYHEGGHTLSAWALEDIERVYKVTILARGRTGGHAMTAQEDDKGMYNRNELFARLVFAMGGRSAEELVFGEPTTGASADIEMATKIARSMVTEYGMSPAVGMVKYGQEQGDPFSGRGGGGNLDHSQEVAATIDTEVQFLLDKAHEVSYSILAEYRDHLDRLAEKLLEKETLRRPDLEALFDDIVPRKVAEVFPDESTRFPRQENREPVKTPVELALERGEEPPKKFSILEASRATRERRRKELEAQGKLPVQPASSAGVAPAAGAAAGSYGTPPPADWSVPGSAGKHRSRAEEQPAEQGFPAQTPAQAPEQSPDSSGGRPNPYATPTASGEHPGMKAYGFGDSELMDQSTGAEHTPGNVSQESPTEMIGFRLPDHERSDYPEKAQKESVLDASETTEMPVVPDQPIDGDSGKSAEGTQENPENEGDNRG</sequence>